<keyword id="KW-0328">Glycosyltransferase</keyword>
<keyword id="KW-0441">Lipid A biosynthesis</keyword>
<keyword id="KW-0444">Lipid biosynthesis</keyword>
<keyword id="KW-0443">Lipid metabolism</keyword>
<keyword id="KW-0808">Transferase</keyword>
<dbReference type="EC" id="2.4.1.182" evidence="1"/>
<dbReference type="EMBL" id="CP000970">
    <property type="protein sequence ID" value="ACB17673.1"/>
    <property type="molecule type" value="Genomic_DNA"/>
</dbReference>
<dbReference type="RefSeq" id="WP_000139684.1">
    <property type="nucleotide sequence ID" value="NC_010498.1"/>
</dbReference>
<dbReference type="SMR" id="B1LGY4"/>
<dbReference type="CAZy" id="GT19">
    <property type="family name" value="Glycosyltransferase Family 19"/>
</dbReference>
<dbReference type="KEGG" id="ecm:EcSMS35_0193"/>
<dbReference type="HOGENOM" id="CLU_036577_3_0_6"/>
<dbReference type="UniPathway" id="UPA00359">
    <property type="reaction ID" value="UER00481"/>
</dbReference>
<dbReference type="Proteomes" id="UP000007011">
    <property type="component" value="Chromosome"/>
</dbReference>
<dbReference type="GO" id="GO:0016020">
    <property type="term" value="C:membrane"/>
    <property type="evidence" value="ECO:0007669"/>
    <property type="project" value="GOC"/>
</dbReference>
<dbReference type="GO" id="GO:0008915">
    <property type="term" value="F:lipid-A-disaccharide synthase activity"/>
    <property type="evidence" value="ECO:0007669"/>
    <property type="project" value="UniProtKB-UniRule"/>
</dbReference>
<dbReference type="GO" id="GO:0005543">
    <property type="term" value="F:phospholipid binding"/>
    <property type="evidence" value="ECO:0007669"/>
    <property type="project" value="TreeGrafter"/>
</dbReference>
<dbReference type="GO" id="GO:0009245">
    <property type="term" value="P:lipid A biosynthetic process"/>
    <property type="evidence" value="ECO:0007669"/>
    <property type="project" value="UniProtKB-UniRule"/>
</dbReference>
<dbReference type="CDD" id="cd01635">
    <property type="entry name" value="Glycosyltransferase_GTB-type"/>
    <property type="match status" value="1"/>
</dbReference>
<dbReference type="HAMAP" id="MF_00392">
    <property type="entry name" value="LpxB"/>
    <property type="match status" value="1"/>
</dbReference>
<dbReference type="InterPro" id="IPR003835">
    <property type="entry name" value="Glyco_trans_19"/>
</dbReference>
<dbReference type="NCBIfam" id="TIGR00215">
    <property type="entry name" value="lpxB"/>
    <property type="match status" value="1"/>
</dbReference>
<dbReference type="PANTHER" id="PTHR30372">
    <property type="entry name" value="LIPID-A-DISACCHARIDE SYNTHASE"/>
    <property type="match status" value="1"/>
</dbReference>
<dbReference type="PANTHER" id="PTHR30372:SF4">
    <property type="entry name" value="LIPID-A-DISACCHARIDE SYNTHASE, MITOCHONDRIAL-RELATED"/>
    <property type="match status" value="1"/>
</dbReference>
<dbReference type="Pfam" id="PF02684">
    <property type="entry name" value="LpxB"/>
    <property type="match status" value="1"/>
</dbReference>
<dbReference type="SUPFAM" id="SSF53756">
    <property type="entry name" value="UDP-Glycosyltransferase/glycogen phosphorylase"/>
    <property type="match status" value="1"/>
</dbReference>
<name>LPXB_ECOSM</name>
<proteinExistence type="inferred from homology"/>
<protein>
    <recommendedName>
        <fullName evidence="1">Lipid-A-disaccharide synthase</fullName>
        <ecNumber evidence="1">2.4.1.182</ecNumber>
    </recommendedName>
</protein>
<comment type="function">
    <text evidence="1">Condensation of UDP-2,3-diacylglucosamine and 2,3-diacylglucosamine-1-phosphate to form lipid A disaccharide, a precursor of lipid A, a phosphorylated glycolipid that anchors the lipopolysaccharide to the outer membrane of the cell.</text>
</comment>
<comment type="catalytic activity">
    <reaction evidence="1">
        <text>2-N,3-O-bis[(3R)-3-hydroxytetradecanoyl]-alpha-D-glucosaminyl 1-phosphate + UDP-2-N,3-O-bis[(3R)-3-hydroxytetradecanoyl]-alpha-D-glucosamine = lipid A disaccharide (E. coli) + UDP + H(+)</text>
        <dbReference type="Rhea" id="RHEA:22668"/>
        <dbReference type="ChEBI" id="CHEBI:15378"/>
        <dbReference type="ChEBI" id="CHEBI:57957"/>
        <dbReference type="ChEBI" id="CHEBI:58223"/>
        <dbReference type="ChEBI" id="CHEBI:58466"/>
        <dbReference type="ChEBI" id="CHEBI:78847"/>
    </reaction>
</comment>
<comment type="catalytic activity">
    <reaction evidence="1">
        <text>a lipid X + a UDP-2-N,3-O-bis[(3R)-3-hydroxyacyl]-alpha-D-glucosamine = a lipid A disaccharide + UDP + H(+)</text>
        <dbReference type="Rhea" id="RHEA:67828"/>
        <dbReference type="ChEBI" id="CHEBI:15378"/>
        <dbReference type="ChEBI" id="CHEBI:58223"/>
        <dbReference type="ChEBI" id="CHEBI:137748"/>
        <dbReference type="ChEBI" id="CHEBI:176338"/>
        <dbReference type="ChEBI" id="CHEBI:176343"/>
        <dbReference type="EC" id="2.4.1.182"/>
    </reaction>
</comment>
<comment type="pathway">
    <text evidence="1">Glycolipid biosynthesis; lipid IV(A) biosynthesis; lipid IV(A) from (3R)-3-hydroxytetradecanoyl-[acyl-carrier-protein] and UDP-N-acetyl-alpha-D-glucosamine: step 5/6.</text>
</comment>
<comment type="similarity">
    <text evidence="1">Belongs to the LpxB family.</text>
</comment>
<reference key="1">
    <citation type="journal article" date="2008" name="J. Bacteriol.">
        <title>Insights into the environmental resistance gene pool from the genome sequence of the multidrug-resistant environmental isolate Escherichia coli SMS-3-5.</title>
        <authorList>
            <person name="Fricke W.F."/>
            <person name="Wright M.S."/>
            <person name="Lindell A.H."/>
            <person name="Harkins D.M."/>
            <person name="Baker-Austin C."/>
            <person name="Ravel J."/>
            <person name="Stepanauskas R."/>
        </authorList>
    </citation>
    <scope>NUCLEOTIDE SEQUENCE [LARGE SCALE GENOMIC DNA]</scope>
    <source>
        <strain>SMS-3-5 / SECEC</strain>
    </source>
</reference>
<accession>B1LGY4</accession>
<evidence type="ECO:0000255" key="1">
    <source>
        <dbReference type="HAMAP-Rule" id="MF_00392"/>
    </source>
</evidence>
<sequence>MTEQRPLTIALVAGETSGDILGAGLIRALKERVPNARFVGVAGPRMQAEGCEAWYEMEELAVMGIVEVLGRLRRLLHIRADLTKRFGELKPDVFVGIDAPDFNITLEGNLKKQGVKTIHYVSPSVWAWRQKRVFKIGRATDLVLAFLPFEKAFYDKYNVPCRFIGHTMADAMPLDPDKNGARDVLGIPYDAHCLALLPGSRGAEVEMLSADFLKTAQLLRQTYPDLEIVVPLVNAKRREQFERIKAEVAPDLAVHLLDGMGREAMVASDAALLASGTAALECMLAKCPMVVGYRMKPFTFWLAKRLVKTEYVSLPNLLAGRELVKELLQEECEPQKLAAALLPLLANGKTSHAMHDTFRELHQQIRCNADEQAAQAVLELAQ</sequence>
<gene>
    <name evidence="1" type="primary">lpxB</name>
    <name type="ordered locus">EcSMS35_0193</name>
</gene>
<feature type="chain" id="PRO_1000191477" description="Lipid-A-disaccharide synthase">
    <location>
        <begin position="1"/>
        <end position="382"/>
    </location>
</feature>
<organism>
    <name type="scientific">Escherichia coli (strain SMS-3-5 / SECEC)</name>
    <dbReference type="NCBI Taxonomy" id="439855"/>
    <lineage>
        <taxon>Bacteria</taxon>
        <taxon>Pseudomonadati</taxon>
        <taxon>Pseudomonadota</taxon>
        <taxon>Gammaproteobacteria</taxon>
        <taxon>Enterobacterales</taxon>
        <taxon>Enterobacteriaceae</taxon>
        <taxon>Escherichia</taxon>
    </lineage>
</organism>